<gene>
    <name type="ordered locus">Spro_2712</name>
</gene>
<proteinExistence type="inferred from homology"/>
<sequence length="154" mass="17386">MPELCPCGSGLEYSACCEPYVNGTQTPATPGLLMRSRFSAYVKHNVDYLIATWHPDCHATEWRNAIVDSFKNTEWLGLTVVEEKQGHEAGEGFVEFIAQFVDGNTGERQAMHERSRFLQIDQRWYYIDGTKPQPGRNAICPCGSGKKYKKCCGR</sequence>
<organism>
    <name type="scientific">Serratia proteamaculans (strain 568)</name>
    <dbReference type="NCBI Taxonomy" id="399741"/>
    <lineage>
        <taxon>Bacteria</taxon>
        <taxon>Pseudomonadati</taxon>
        <taxon>Pseudomonadota</taxon>
        <taxon>Gammaproteobacteria</taxon>
        <taxon>Enterobacterales</taxon>
        <taxon>Yersiniaceae</taxon>
        <taxon>Serratia</taxon>
    </lineage>
</organism>
<evidence type="ECO:0000255" key="1">
    <source>
        <dbReference type="HAMAP-Rule" id="MF_00612"/>
    </source>
</evidence>
<name>Y2712_SERP5</name>
<reference key="1">
    <citation type="submission" date="2007-09" db="EMBL/GenBank/DDBJ databases">
        <title>Complete sequence of chromosome of Serratia proteamaculans 568.</title>
        <authorList>
            <consortium name="US DOE Joint Genome Institute"/>
            <person name="Copeland A."/>
            <person name="Lucas S."/>
            <person name="Lapidus A."/>
            <person name="Barry K."/>
            <person name="Glavina del Rio T."/>
            <person name="Dalin E."/>
            <person name="Tice H."/>
            <person name="Pitluck S."/>
            <person name="Chain P."/>
            <person name="Malfatti S."/>
            <person name="Shin M."/>
            <person name="Vergez L."/>
            <person name="Schmutz J."/>
            <person name="Larimer F."/>
            <person name="Land M."/>
            <person name="Hauser L."/>
            <person name="Kyrpides N."/>
            <person name="Kim E."/>
            <person name="Taghavi S."/>
            <person name="Newman L."/>
            <person name="Vangronsveld J."/>
            <person name="van der Lelie D."/>
            <person name="Richardson P."/>
        </authorList>
    </citation>
    <scope>NUCLEOTIDE SEQUENCE [LARGE SCALE GENOMIC DNA]</scope>
    <source>
        <strain>568</strain>
    </source>
</reference>
<dbReference type="EMBL" id="CP000826">
    <property type="protein sequence ID" value="ABV41813.1"/>
    <property type="molecule type" value="Genomic_DNA"/>
</dbReference>
<dbReference type="SMR" id="A8GFC3"/>
<dbReference type="STRING" id="399741.Spro_2712"/>
<dbReference type="KEGG" id="spe:Spro_2712"/>
<dbReference type="eggNOG" id="COG3012">
    <property type="taxonomic scope" value="Bacteria"/>
</dbReference>
<dbReference type="HOGENOM" id="CLU_099590_0_0_6"/>
<dbReference type="OrthoDB" id="21421at2"/>
<dbReference type="Gene3D" id="3.10.450.50">
    <property type="match status" value="1"/>
</dbReference>
<dbReference type="HAMAP" id="MF_00612">
    <property type="entry name" value="UPF0225"/>
    <property type="match status" value="1"/>
</dbReference>
<dbReference type="InterPro" id="IPR032710">
    <property type="entry name" value="NTF2-like_dom_sf"/>
</dbReference>
<dbReference type="InterPro" id="IPR004027">
    <property type="entry name" value="SEC_C_motif"/>
</dbReference>
<dbReference type="InterPro" id="IPR023006">
    <property type="entry name" value="UPF0225"/>
</dbReference>
<dbReference type="InterPro" id="IPR048469">
    <property type="entry name" value="YchJ-like_M"/>
</dbReference>
<dbReference type="NCBIfam" id="NF002449">
    <property type="entry name" value="PRK01617.1"/>
    <property type="match status" value="1"/>
</dbReference>
<dbReference type="NCBIfam" id="NF002486">
    <property type="entry name" value="PRK01752.1"/>
    <property type="match status" value="1"/>
</dbReference>
<dbReference type="PANTHER" id="PTHR33747:SF1">
    <property type="entry name" value="ADENYLATE CYCLASE-ASSOCIATED CAP C-TERMINAL DOMAIN-CONTAINING PROTEIN"/>
    <property type="match status" value="1"/>
</dbReference>
<dbReference type="PANTHER" id="PTHR33747">
    <property type="entry name" value="UPF0225 PROTEIN SCO1677"/>
    <property type="match status" value="1"/>
</dbReference>
<dbReference type="Pfam" id="PF02810">
    <property type="entry name" value="SEC-C"/>
    <property type="match status" value="2"/>
</dbReference>
<dbReference type="Pfam" id="PF17775">
    <property type="entry name" value="YchJ_M-like"/>
    <property type="match status" value="1"/>
</dbReference>
<dbReference type="SUPFAM" id="SSF54427">
    <property type="entry name" value="NTF2-like"/>
    <property type="match status" value="1"/>
</dbReference>
<dbReference type="SUPFAM" id="SSF103642">
    <property type="entry name" value="Sec-C motif"/>
    <property type="match status" value="1"/>
</dbReference>
<protein>
    <recommendedName>
        <fullName evidence="1">UPF0225 protein Spro_2712</fullName>
    </recommendedName>
</protein>
<accession>A8GFC3</accession>
<comment type="similarity">
    <text evidence="1">Belongs to the UPF0225 family.</text>
</comment>
<feature type="chain" id="PRO_1000061302" description="UPF0225 protein Spro_2712">
    <location>
        <begin position="1"/>
        <end position="154"/>
    </location>
</feature>